<feature type="chain" id="PRO_0000235955" description="Capsular polysaccharide phosphotransferase">
    <location>
        <begin position="1"/>
        <end position="373"/>
    </location>
</feature>
<accession>Q51151</accession>
<reference key="1">
    <citation type="journal article" date="1994" name="Mol. Microbiol.">
        <title>Contribution of genes from the capsule gene complex (cps) to lipooligosaccharide biosynthesis and serum resistance in Neisseria meningitidis.</title>
        <authorList>
            <person name="Hammerschmidt S."/>
            <person name="Birkholz C."/>
            <person name="Zaehringer U."/>
            <person name="Robertson B.D."/>
            <person name="van Putten J.P.M."/>
            <person name="Ebeling O."/>
            <person name="Frosch M."/>
        </authorList>
    </citation>
    <scope>NUCLEOTIDE SEQUENCE [GENOMIC DNA]</scope>
    <source>
        <strain>B1940 / Serogroup B</strain>
    </source>
</reference>
<reference key="2">
    <citation type="journal article" date="2005" name="PLoS Comput. Biol.">
        <title>Stealth proteins: in silico identification of a novel protein family rendering bacterial pathogens invisible to host immune defense.</title>
        <authorList>
            <person name="Sperisen P."/>
            <person name="Schmid C.D."/>
            <person name="Bucher P."/>
            <person name="Zilian O."/>
        </authorList>
    </citation>
    <scope>IDENTIFICATION AS A STEALTH PROTEIN</scope>
    <scope>PREDICTION OF FUNCTION</scope>
</reference>
<evidence type="ECO:0000305" key="1"/>
<protein>
    <recommendedName>
        <fullName>Capsular polysaccharide phosphotransferase</fullName>
        <ecNumber>2.7.-.-</ecNumber>
    </recommendedName>
    <alternativeName>
        <fullName>Stealth protein</fullName>
    </alternativeName>
</protein>
<keyword id="KW-0270">Exopolysaccharide synthesis</keyword>
<keyword id="KW-0808">Transferase</keyword>
<dbReference type="EC" id="2.7.-.-"/>
<dbReference type="EMBL" id="L09188">
    <property type="protein sequence ID" value="AAA63160.1"/>
    <property type="molecule type" value="Genomic_DNA"/>
</dbReference>
<dbReference type="PIR" id="S42434">
    <property type="entry name" value="S42434"/>
</dbReference>
<dbReference type="SMR" id="Q51151"/>
<dbReference type="GO" id="GO:0016772">
    <property type="term" value="F:transferase activity, transferring phosphorus-containing groups"/>
    <property type="evidence" value="ECO:0007669"/>
    <property type="project" value="InterPro"/>
</dbReference>
<dbReference type="GO" id="GO:0000271">
    <property type="term" value="P:polysaccharide biosynthetic process"/>
    <property type="evidence" value="ECO:0007669"/>
    <property type="project" value="UniProtKB-KW"/>
</dbReference>
<dbReference type="InterPro" id="IPR047141">
    <property type="entry name" value="Stealth"/>
</dbReference>
<dbReference type="InterPro" id="IPR031358">
    <property type="entry name" value="Stealth_CR1"/>
</dbReference>
<dbReference type="InterPro" id="IPR021520">
    <property type="entry name" value="Stealth_CR2"/>
</dbReference>
<dbReference type="PANTHER" id="PTHR24045">
    <property type="match status" value="1"/>
</dbReference>
<dbReference type="PANTHER" id="PTHR24045:SF0">
    <property type="entry name" value="N-ACETYLGLUCOSAMINE-1-PHOSPHOTRANSFERASE SUBUNITS ALPHA_BETA"/>
    <property type="match status" value="1"/>
</dbReference>
<dbReference type="Pfam" id="PF17101">
    <property type="entry name" value="Stealth_CR1"/>
    <property type="match status" value="1"/>
</dbReference>
<dbReference type="Pfam" id="PF11380">
    <property type="entry name" value="Stealth_CR2"/>
    <property type="match status" value="1"/>
</dbReference>
<proteinExistence type="inferred from homology"/>
<comment type="function">
    <text>Part of a capsule gene locus. Expression was not detected under standard growth conditions.</text>
</comment>
<comment type="miscellaneous">
    <text>Stealth proteins are part of a protein family that is conserved from bacteria to higher eukaryotes. Family members were first identified in microbes as proteins that help pathogens to elude the host innate immune system. Microbial stealth proteins are involved in the biosynthesis of exopolysaccharides. Stealth proteins are predicted to function as hexose-1-phosphoryltransferases.</text>
</comment>
<comment type="similarity">
    <text evidence="1">Belongs to the stealth family.</text>
</comment>
<organism>
    <name type="scientific">Neisseria meningitidis serogroup B</name>
    <dbReference type="NCBI Taxonomy" id="491"/>
    <lineage>
        <taxon>Bacteria</taxon>
        <taxon>Pseudomonadati</taxon>
        <taxon>Pseudomonadota</taxon>
        <taxon>Betaproteobacteria</taxon>
        <taxon>Neisseriales</taxon>
        <taxon>Neisseriaceae</taxon>
        <taxon>Neisseria</taxon>
    </lineage>
</organism>
<name>LCBA_NEIMI</name>
<sequence>MNLNKIRKFFRESHIFFRDFLNKRFPPYNVEQPIPETEEFTLINADANLASLTENVLPNFPIDVVFTWVDNTDKAWQEQYYRTLQPIDQEDIGLYATDPARFSNHNELFYSVQAVQKFMPWVRNIFIVTADQKPKWLDENIHSKIKLINHSQLIDAKYLPTFNSHVIEANLYKIPDLSEHFIYFNDDVFVARPLMPNHFFENNGLASLFVANKSFQKMRQRGLITPTLTASEHALKLLKRHYPTININTPLVHTYVPLRKTSFQKAWSLFEDEINSFLNNKVRHNSELNMASFLIPWLMYLDGYATPKREICYYFNIRSSHAQTQYKKLLFEKEHLHMPHSFCINDSSSNNADKNYALHFRNFMDTYFEIETE</sequence>